<proteinExistence type="predicted"/>
<keyword id="KW-0963">Cytoplasm</keyword>
<keyword id="KW-0479">Metal-binding</keyword>
<keyword id="KW-1185">Reference proteome</keyword>
<keyword id="KW-0862">Zinc</keyword>
<keyword id="KW-0863">Zinc-finger</keyword>
<sequence length="251" mass="28214">MIESELATSRWSLMLEADIATQTTRSLTNELSFIVAGLRPSTKESVLHFLELIFINLKYQSKKWLYSLVICKSLIALLGRKRLSANVRKIVRFLNVIICVIGLWKGLSAMSGKNTFINGLQSYLISETALPELGSFQELSTSSLGSFRMFQQIAVGFVDALFCTRIPASLWIKYKEYTTSAETTVPQECGLCMMCVQRGDERVAITTPYTTDCGHTYCYACIMSRLKLVNNVSCPICKHRIRFALPDQTMG</sequence>
<gene>
    <name type="ORF">SPAC23A1.07</name>
</gene>
<name>YFH7_SCHPO</name>
<feature type="chain" id="PRO_0000310839" description="Uncharacterized RING finger protein C23A1.07">
    <location>
        <begin position="1"/>
        <end position="251"/>
    </location>
</feature>
<feature type="zinc finger region" description="RING-type" evidence="1">
    <location>
        <begin position="192"/>
        <end position="238"/>
    </location>
</feature>
<dbReference type="EMBL" id="CU329670">
    <property type="protein sequence ID" value="CAA16981.1"/>
    <property type="molecule type" value="Genomic_DNA"/>
</dbReference>
<dbReference type="PIR" id="T38227">
    <property type="entry name" value="T38227"/>
</dbReference>
<dbReference type="SMR" id="O42845"/>
<dbReference type="BioGRID" id="278464">
    <property type="interactions" value="26"/>
</dbReference>
<dbReference type="FunCoup" id="O42845">
    <property type="interactions" value="20"/>
</dbReference>
<dbReference type="PaxDb" id="4896-SPAC23A1.07.1"/>
<dbReference type="EnsemblFungi" id="SPAC23A1.07.1">
    <property type="protein sequence ID" value="SPAC23A1.07.1:pep"/>
    <property type="gene ID" value="SPAC23A1.07"/>
</dbReference>
<dbReference type="KEGG" id="spo:2541979"/>
<dbReference type="PomBase" id="SPAC23A1.07"/>
<dbReference type="VEuPathDB" id="FungiDB:SPAC23A1.07"/>
<dbReference type="HOGENOM" id="CLU_1138563_0_0_1"/>
<dbReference type="InParanoid" id="O42845"/>
<dbReference type="OMA" id="ECAFCIL"/>
<dbReference type="PRO" id="PR:O42845"/>
<dbReference type="Proteomes" id="UP000002485">
    <property type="component" value="Chromosome I"/>
</dbReference>
<dbReference type="GO" id="GO:0005737">
    <property type="term" value="C:cytoplasm"/>
    <property type="evidence" value="ECO:0007005"/>
    <property type="project" value="PomBase"/>
</dbReference>
<dbReference type="GO" id="GO:0061630">
    <property type="term" value="F:ubiquitin protein ligase activity"/>
    <property type="evidence" value="ECO:0000255"/>
    <property type="project" value="PomBase"/>
</dbReference>
<dbReference type="GO" id="GO:0008270">
    <property type="term" value="F:zinc ion binding"/>
    <property type="evidence" value="ECO:0000255"/>
    <property type="project" value="PomBase"/>
</dbReference>
<dbReference type="GO" id="GO:0036503">
    <property type="term" value="P:ERAD pathway"/>
    <property type="evidence" value="ECO:0000303"/>
    <property type="project" value="PomBase"/>
</dbReference>
<dbReference type="Gene3D" id="3.30.40.10">
    <property type="entry name" value="Zinc/RING finger domain, C3HC4 (zinc finger)"/>
    <property type="match status" value="1"/>
</dbReference>
<dbReference type="InterPro" id="IPR027370">
    <property type="entry name" value="Znf-RING_euk"/>
</dbReference>
<dbReference type="InterPro" id="IPR001841">
    <property type="entry name" value="Znf_RING"/>
</dbReference>
<dbReference type="InterPro" id="IPR013083">
    <property type="entry name" value="Znf_RING/FYVE/PHD"/>
</dbReference>
<dbReference type="InterPro" id="IPR017907">
    <property type="entry name" value="Znf_RING_CS"/>
</dbReference>
<dbReference type="Pfam" id="PF13445">
    <property type="entry name" value="zf-RING_UBOX"/>
    <property type="match status" value="1"/>
</dbReference>
<dbReference type="SMART" id="SM00184">
    <property type="entry name" value="RING"/>
    <property type="match status" value="1"/>
</dbReference>
<dbReference type="SUPFAM" id="SSF57850">
    <property type="entry name" value="RING/U-box"/>
    <property type="match status" value="1"/>
</dbReference>
<dbReference type="PROSITE" id="PS00518">
    <property type="entry name" value="ZF_RING_1"/>
    <property type="match status" value="1"/>
</dbReference>
<dbReference type="PROSITE" id="PS50089">
    <property type="entry name" value="ZF_RING_2"/>
    <property type="match status" value="1"/>
</dbReference>
<reference key="1">
    <citation type="journal article" date="2002" name="Nature">
        <title>The genome sequence of Schizosaccharomyces pombe.</title>
        <authorList>
            <person name="Wood V."/>
            <person name="Gwilliam R."/>
            <person name="Rajandream M.A."/>
            <person name="Lyne M.H."/>
            <person name="Lyne R."/>
            <person name="Stewart A."/>
            <person name="Sgouros J.G."/>
            <person name="Peat N."/>
            <person name="Hayles J."/>
            <person name="Baker S.G."/>
            <person name="Basham D."/>
            <person name="Bowman S."/>
            <person name="Brooks K."/>
            <person name="Brown D."/>
            <person name="Brown S."/>
            <person name="Chillingworth T."/>
            <person name="Churcher C.M."/>
            <person name="Collins M."/>
            <person name="Connor R."/>
            <person name="Cronin A."/>
            <person name="Davis P."/>
            <person name="Feltwell T."/>
            <person name="Fraser A."/>
            <person name="Gentles S."/>
            <person name="Goble A."/>
            <person name="Hamlin N."/>
            <person name="Harris D.E."/>
            <person name="Hidalgo J."/>
            <person name="Hodgson G."/>
            <person name="Holroyd S."/>
            <person name="Hornsby T."/>
            <person name="Howarth S."/>
            <person name="Huckle E.J."/>
            <person name="Hunt S."/>
            <person name="Jagels K."/>
            <person name="James K.D."/>
            <person name="Jones L."/>
            <person name="Jones M."/>
            <person name="Leather S."/>
            <person name="McDonald S."/>
            <person name="McLean J."/>
            <person name="Mooney P."/>
            <person name="Moule S."/>
            <person name="Mungall K.L."/>
            <person name="Murphy L.D."/>
            <person name="Niblett D."/>
            <person name="Odell C."/>
            <person name="Oliver K."/>
            <person name="O'Neil S."/>
            <person name="Pearson D."/>
            <person name="Quail M.A."/>
            <person name="Rabbinowitsch E."/>
            <person name="Rutherford K.M."/>
            <person name="Rutter S."/>
            <person name="Saunders D."/>
            <person name="Seeger K."/>
            <person name="Sharp S."/>
            <person name="Skelton J."/>
            <person name="Simmonds M.N."/>
            <person name="Squares R."/>
            <person name="Squares S."/>
            <person name="Stevens K."/>
            <person name="Taylor K."/>
            <person name="Taylor R.G."/>
            <person name="Tivey A."/>
            <person name="Walsh S.V."/>
            <person name="Warren T."/>
            <person name="Whitehead S."/>
            <person name="Woodward J.R."/>
            <person name="Volckaert G."/>
            <person name="Aert R."/>
            <person name="Robben J."/>
            <person name="Grymonprez B."/>
            <person name="Weltjens I."/>
            <person name="Vanstreels E."/>
            <person name="Rieger M."/>
            <person name="Schaefer M."/>
            <person name="Mueller-Auer S."/>
            <person name="Gabel C."/>
            <person name="Fuchs M."/>
            <person name="Duesterhoeft A."/>
            <person name="Fritzc C."/>
            <person name="Holzer E."/>
            <person name="Moestl D."/>
            <person name="Hilbert H."/>
            <person name="Borzym K."/>
            <person name="Langer I."/>
            <person name="Beck A."/>
            <person name="Lehrach H."/>
            <person name="Reinhardt R."/>
            <person name="Pohl T.M."/>
            <person name="Eger P."/>
            <person name="Zimmermann W."/>
            <person name="Wedler H."/>
            <person name="Wambutt R."/>
            <person name="Purnelle B."/>
            <person name="Goffeau A."/>
            <person name="Cadieu E."/>
            <person name="Dreano S."/>
            <person name="Gloux S."/>
            <person name="Lelaure V."/>
            <person name="Mottier S."/>
            <person name="Galibert F."/>
            <person name="Aves S.J."/>
            <person name="Xiang Z."/>
            <person name="Hunt C."/>
            <person name="Moore K."/>
            <person name="Hurst S.M."/>
            <person name="Lucas M."/>
            <person name="Rochet M."/>
            <person name="Gaillardin C."/>
            <person name="Tallada V.A."/>
            <person name="Garzon A."/>
            <person name="Thode G."/>
            <person name="Daga R.R."/>
            <person name="Cruzado L."/>
            <person name="Jimenez J."/>
            <person name="Sanchez M."/>
            <person name="del Rey F."/>
            <person name="Benito J."/>
            <person name="Dominguez A."/>
            <person name="Revuelta J.L."/>
            <person name="Moreno S."/>
            <person name="Armstrong J."/>
            <person name="Forsburg S.L."/>
            <person name="Cerutti L."/>
            <person name="Lowe T."/>
            <person name="McCombie W.R."/>
            <person name="Paulsen I."/>
            <person name="Potashkin J."/>
            <person name="Shpakovski G.V."/>
            <person name="Ussery D."/>
            <person name="Barrell B.G."/>
            <person name="Nurse P."/>
        </authorList>
    </citation>
    <scope>NUCLEOTIDE SEQUENCE [LARGE SCALE GENOMIC DNA]</scope>
    <source>
        <strain>972 / ATCC 24843</strain>
    </source>
</reference>
<reference key="2">
    <citation type="journal article" date="2006" name="Nat. Biotechnol.">
        <title>ORFeome cloning and global analysis of protein localization in the fission yeast Schizosaccharomyces pombe.</title>
        <authorList>
            <person name="Matsuyama A."/>
            <person name="Arai R."/>
            <person name="Yashiroda Y."/>
            <person name="Shirai A."/>
            <person name="Kamata A."/>
            <person name="Sekido S."/>
            <person name="Kobayashi Y."/>
            <person name="Hashimoto A."/>
            <person name="Hamamoto M."/>
            <person name="Hiraoka Y."/>
            <person name="Horinouchi S."/>
            <person name="Yoshida M."/>
        </authorList>
    </citation>
    <scope>SUBCELLULAR LOCATION [LARGE SCALE ANALYSIS]</scope>
</reference>
<organism>
    <name type="scientific">Schizosaccharomyces pombe (strain 972 / ATCC 24843)</name>
    <name type="common">Fission yeast</name>
    <dbReference type="NCBI Taxonomy" id="284812"/>
    <lineage>
        <taxon>Eukaryota</taxon>
        <taxon>Fungi</taxon>
        <taxon>Dikarya</taxon>
        <taxon>Ascomycota</taxon>
        <taxon>Taphrinomycotina</taxon>
        <taxon>Schizosaccharomycetes</taxon>
        <taxon>Schizosaccharomycetales</taxon>
        <taxon>Schizosaccharomycetaceae</taxon>
        <taxon>Schizosaccharomyces</taxon>
    </lineage>
</organism>
<accession>O42845</accession>
<comment type="subcellular location">
    <subcellularLocation>
        <location evidence="2">Cytoplasm</location>
    </subcellularLocation>
</comment>
<evidence type="ECO:0000255" key="1">
    <source>
        <dbReference type="PROSITE-ProRule" id="PRU00175"/>
    </source>
</evidence>
<evidence type="ECO:0000269" key="2">
    <source>
    </source>
</evidence>
<protein>
    <recommendedName>
        <fullName>Uncharacterized RING finger protein C23A1.07</fullName>
    </recommendedName>
</protein>